<comment type="function">
    <text evidence="3 5">Part of the iron transporter system efeUOB/M involved in iron import (PubMed:16672620, PubMed:23764491). Specifically binds Fe(3+), which is produced by EfeB-mediated oxidation of Fe(2+), and delivers it to the cell membrane permease EfeU (PubMed:23764491).</text>
</comment>
<comment type="subunit">
    <text evidence="5">Component of the iron transporter efeUOB/M complex composed of EfeU, EfeM and EfeB; EfeU is essential for the complex formation.</text>
</comment>
<comment type="subcellular location">
    <subcellularLocation>
        <location evidence="5">Cell membrane</location>
        <topology evidence="9">Lipid-anchor</topology>
        <orientation evidence="8">Extracellular side</orientation>
    </subcellularLocation>
    <subcellularLocation>
        <location evidence="4">Membrane raft</location>
    </subcellularLocation>
    <text evidence="4">Present in detergent-resistant membrane (DRM) fractions that may be equivalent to eukaryotic membrane rafts; these rafts include proteins involved in signaling, molecule trafficking and protein secretion.</text>
</comment>
<comment type="domain">
    <text evidence="1">The peptidase M75 domain contains 2 metal binding sites, site III and site IV (By similarity). Lacks the N-terminal Cup-like domain present in EfeO proteins that contains metal binding sites I and II (By similarity).</text>
</comment>
<comment type="disruption phenotype">
    <text evidence="5">Severe reduction in Fe(2+) and Fe(3+) uptake and in cell growth.</text>
</comment>
<comment type="similarity">
    <text evidence="8">Belongs to the EfeM/EfeO family.</text>
</comment>
<organism>
    <name type="scientific">Bacillus subtilis (strain 168)</name>
    <dbReference type="NCBI Taxonomy" id="224308"/>
    <lineage>
        <taxon>Bacteria</taxon>
        <taxon>Bacillati</taxon>
        <taxon>Bacillota</taxon>
        <taxon>Bacilli</taxon>
        <taxon>Bacillales</taxon>
        <taxon>Bacillaceae</taxon>
        <taxon>Bacillus</taxon>
    </lineage>
</organism>
<keyword id="KW-1003">Cell membrane</keyword>
<keyword id="KW-0406">Ion transport</keyword>
<keyword id="KW-0408">Iron</keyword>
<keyword id="KW-0410">Iron transport</keyword>
<keyword id="KW-0449">Lipoprotein</keyword>
<keyword id="KW-0472">Membrane</keyword>
<keyword id="KW-0479">Metal-binding</keyword>
<keyword id="KW-1185">Reference proteome</keyword>
<keyword id="KW-0732">Signal</keyword>
<keyword id="KW-0813">Transport</keyword>
<feature type="signal peptide" evidence="2">
    <location>
        <begin position="1"/>
        <end position="22"/>
    </location>
</feature>
<feature type="chain" id="PRO_0000049954" description="Iron uptake system component EfeM">
    <location>
        <begin position="23"/>
        <end position="385"/>
    </location>
</feature>
<sequence length="385" mass="42796">MNFTKIAVSAGCILALCAGCGANDTSSTKEKASSEKSGVTKEITASVNKMETIISKLNDSVEKGDQKEIEKKGKELNSYWLSFENDIRSDYPFEYTEIEKHLQPIYTEAQKDKPDAGKIKTESESLKASLEDLTEAKKSGKKASDQLAKAADEYKGYVKEQSDQLVKATEAFTGAVKSGDIEKSKTLYAKARVYYERIEPIAESLGDLDPKIDARENDVEEGDKWTGFHKLEKAIWKDQDISGEKATADQLLKDVKELDGSIQSLKLTPEQIVAGAMELLNEAGISKITGEEERYSRIDLVDLMANVEGSEAVYQTVKSALVKDHSDLTEKLDTEFSEFEVLMAKYKTNDQSYTSYDKLSEKQIRELSTKLTTLSETMSKIANVL</sequence>
<proteinExistence type="evidence at protein level"/>
<evidence type="ECO:0000250" key="1">
    <source>
        <dbReference type="UniProtKB" id="Q4ZR20"/>
    </source>
</evidence>
<evidence type="ECO:0000255" key="2"/>
<evidence type="ECO:0000269" key="3">
    <source>
    </source>
</evidence>
<evidence type="ECO:0000269" key="4">
    <source>
    </source>
</evidence>
<evidence type="ECO:0000269" key="5">
    <source>
    </source>
</evidence>
<evidence type="ECO:0000303" key="6">
    <source>
    </source>
</evidence>
<evidence type="ECO:0000303" key="7">
    <source>
    </source>
</evidence>
<evidence type="ECO:0000305" key="8"/>
<evidence type="ECO:0000305" key="9">
    <source>
    </source>
</evidence>
<dbReference type="EMBL" id="X73124">
    <property type="protein sequence ID" value="CAA51584.1"/>
    <property type="molecule type" value="Genomic_DNA"/>
</dbReference>
<dbReference type="EMBL" id="AL009126">
    <property type="protein sequence ID" value="CAB15853.1"/>
    <property type="molecule type" value="Genomic_DNA"/>
</dbReference>
<dbReference type="PIR" id="S39683">
    <property type="entry name" value="S39683"/>
</dbReference>
<dbReference type="RefSeq" id="NP_391706.1">
    <property type="nucleotide sequence ID" value="NC_000964.3"/>
</dbReference>
<dbReference type="RefSeq" id="WP_003243208.1">
    <property type="nucleotide sequence ID" value="NZ_OZ025638.1"/>
</dbReference>
<dbReference type="SMR" id="P39596"/>
<dbReference type="FunCoup" id="P39596">
    <property type="interactions" value="36"/>
</dbReference>
<dbReference type="STRING" id="224308.BSU38270"/>
<dbReference type="jPOST" id="P39596"/>
<dbReference type="PaxDb" id="224308-BSU38270"/>
<dbReference type="DNASU" id="937322"/>
<dbReference type="EnsemblBacteria" id="CAB15853">
    <property type="protein sequence ID" value="CAB15853"/>
    <property type="gene ID" value="BSU_38270"/>
</dbReference>
<dbReference type="GeneID" id="937322"/>
<dbReference type="KEGG" id="bsu:BSU38270"/>
<dbReference type="PATRIC" id="fig|224308.179.peg.4143"/>
<dbReference type="eggNOG" id="COG2822">
    <property type="taxonomic scope" value="Bacteria"/>
</dbReference>
<dbReference type="InParanoid" id="P39596"/>
<dbReference type="OrthoDB" id="7348379at2"/>
<dbReference type="PhylomeDB" id="P39596"/>
<dbReference type="BioCyc" id="BSUB:BSU38270-MONOMER"/>
<dbReference type="Proteomes" id="UP000001570">
    <property type="component" value="Chromosome"/>
</dbReference>
<dbReference type="GO" id="GO:0045121">
    <property type="term" value="C:membrane raft"/>
    <property type="evidence" value="ECO:0007669"/>
    <property type="project" value="UniProtKB-SubCell"/>
</dbReference>
<dbReference type="GO" id="GO:0005886">
    <property type="term" value="C:plasma membrane"/>
    <property type="evidence" value="ECO:0007669"/>
    <property type="project" value="UniProtKB-SubCell"/>
</dbReference>
<dbReference type="GO" id="GO:0046872">
    <property type="term" value="F:metal ion binding"/>
    <property type="evidence" value="ECO:0007669"/>
    <property type="project" value="UniProtKB-KW"/>
</dbReference>
<dbReference type="GO" id="GO:0006826">
    <property type="term" value="P:iron ion transport"/>
    <property type="evidence" value="ECO:0007669"/>
    <property type="project" value="UniProtKB-KW"/>
</dbReference>
<dbReference type="CDD" id="cd14656">
    <property type="entry name" value="Imelysin-like_EfeO"/>
    <property type="match status" value="1"/>
</dbReference>
<dbReference type="Gene3D" id="1.20.1420.20">
    <property type="entry name" value="M75 peptidase, HXXE motif"/>
    <property type="match status" value="1"/>
</dbReference>
<dbReference type="InterPro" id="IPR050894">
    <property type="entry name" value="EfeM/EfeO_iron_uptake"/>
</dbReference>
<dbReference type="InterPro" id="IPR018976">
    <property type="entry name" value="Imelysin-like"/>
</dbReference>
<dbReference type="InterPro" id="IPR034981">
    <property type="entry name" value="Imelysin-like_EfeO/Algp7"/>
</dbReference>
<dbReference type="InterPro" id="IPR038352">
    <property type="entry name" value="Imelysin_sf"/>
</dbReference>
<dbReference type="InterPro" id="IPR053377">
    <property type="entry name" value="Iron_uptake_EfeM/EfeO"/>
</dbReference>
<dbReference type="NCBIfam" id="NF041757">
    <property type="entry name" value="EfeO"/>
    <property type="match status" value="1"/>
</dbReference>
<dbReference type="PANTHER" id="PTHR39192">
    <property type="entry name" value="IRON UPTAKE SYSTEM COMPONENT EFEO"/>
    <property type="match status" value="1"/>
</dbReference>
<dbReference type="PANTHER" id="PTHR39192:SF1">
    <property type="entry name" value="IRON UPTAKE SYSTEM COMPONENT EFEO"/>
    <property type="match status" value="1"/>
</dbReference>
<dbReference type="Pfam" id="PF09375">
    <property type="entry name" value="Peptidase_M75"/>
    <property type="match status" value="1"/>
</dbReference>
<protein>
    <recommendedName>
        <fullName>Iron uptake system component EfeM</fullName>
    </recommendedName>
</protein>
<reference key="1">
    <citation type="journal article" date="1993" name="Mol. Microbiol.">
        <title>Bacillus subtilis genome project: cloning and sequencing of the 97 kb region from 325 degrees to 333 degrees.</title>
        <authorList>
            <person name="Glaser P."/>
            <person name="Kunst F."/>
            <person name="Arnaud M."/>
            <person name="Coudart M.P."/>
            <person name="Gonzales W."/>
            <person name="Hullo M.-F."/>
            <person name="Ionescu M."/>
            <person name="Lubochinsky B."/>
            <person name="Marcelino L."/>
            <person name="Moszer I."/>
            <person name="Presecan E."/>
            <person name="Santana M."/>
            <person name="Schneider E."/>
            <person name="Schweizer J."/>
            <person name="Vertes A."/>
            <person name="Rapoport G."/>
            <person name="Danchin A."/>
        </authorList>
    </citation>
    <scope>NUCLEOTIDE SEQUENCE [GENOMIC DNA]</scope>
    <source>
        <strain>168</strain>
    </source>
</reference>
<reference key="2">
    <citation type="journal article" date="1997" name="Nature">
        <title>The complete genome sequence of the Gram-positive bacterium Bacillus subtilis.</title>
        <authorList>
            <person name="Kunst F."/>
            <person name="Ogasawara N."/>
            <person name="Moszer I."/>
            <person name="Albertini A.M."/>
            <person name="Alloni G."/>
            <person name="Azevedo V."/>
            <person name="Bertero M.G."/>
            <person name="Bessieres P."/>
            <person name="Bolotin A."/>
            <person name="Borchert S."/>
            <person name="Borriss R."/>
            <person name="Boursier L."/>
            <person name="Brans A."/>
            <person name="Braun M."/>
            <person name="Brignell S.C."/>
            <person name="Bron S."/>
            <person name="Brouillet S."/>
            <person name="Bruschi C.V."/>
            <person name="Caldwell B."/>
            <person name="Capuano V."/>
            <person name="Carter N.M."/>
            <person name="Choi S.-K."/>
            <person name="Codani J.-J."/>
            <person name="Connerton I.F."/>
            <person name="Cummings N.J."/>
            <person name="Daniel R.A."/>
            <person name="Denizot F."/>
            <person name="Devine K.M."/>
            <person name="Duesterhoeft A."/>
            <person name="Ehrlich S.D."/>
            <person name="Emmerson P.T."/>
            <person name="Entian K.-D."/>
            <person name="Errington J."/>
            <person name="Fabret C."/>
            <person name="Ferrari E."/>
            <person name="Foulger D."/>
            <person name="Fritz C."/>
            <person name="Fujita M."/>
            <person name="Fujita Y."/>
            <person name="Fuma S."/>
            <person name="Galizzi A."/>
            <person name="Galleron N."/>
            <person name="Ghim S.-Y."/>
            <person name="Glaser P."/>
            <person name="Goffeau A."/>
            <person name="Golightly E.J."/>
            <person name="Grandi G."/>
            <person name="Guiseppi G."/>
            <person name="Guy B.J."/>
            <person name="Haga K."/>
            <person name="Haiech J."/>
            <person name="Harwood C.R."/>
            <person name="Henaut A."/>
            <person name="Hilbert H."/>
            <person name="Holsappel S."/>
            <person name="Hosono S."/>
            <person name="Hullo M.-F."/>
            <person name="Itaya M."/>
            <person name="Jones L.-M."/>
            <person name="Joris B."/>
            <person name="Karamata D."/>
            <person name="Kasahara Y."/>
            <person name="Klaerr-Blanchard M."/>
            <person name="Klein C."/>
            <person name="Kobayashi Y."/>
            <person name="Koetter P."/>
            <person name="Koningstein G."/>
            <person name="Krogh S."/>
            <person name="Kumano M."/>
            <person name="Kurita K."/>
            <person name="Lapidus A."/>
            <person name="Lardinois S."/>
            <person name="Lauber J."/>
            <person name="Lazarevic V."/>
            <person name="Lee S.-M."/>
            <person name="Levine A."/>
            <person name="Liu H."/>
            <person name="Masuda S."/>
            <person name="Mauel C."/>
            <person name="Medigue C."/>
            <person name="Medina N."/>
            <person name="Mellado R.P."/>
            <person name="Mizuno M."/>
            <person name="Moestl D."/>
            <person name="Nakai S."/>
            <person name="Noback M."/>
            <person name="Noone D."/>
            <person name="O'Reilly M."/>
            <person name="Ogawa K."/>
            <person name="Ogiwara A."/>
            <person name="Oudega B."/>
            <person name="Park S.-H."/>
            <person name="Parro V."/>
            <person name="Pohl T.M."/>
            <person name="Portetelle D."/>
            <person name="Porwollik S."/>
            <person name="Prescott A.M."/>
            <person name="Presecan E."/>
            <person name="Pujic P."/>
            <person name="Purnelle B."/>
            <person name="Rapoport G."/>
            <person name="Rey M."/>
            <person name="Reynolds S."/>
            <person name="Rieger M."/>
            <person name="Rivolta C."/>
            <person name="Rocha E."/>
            <person name="Roche B."/>
            <person name="Rose M."/>
            <person name="Sadaie Y."/>
            <person name="Sato T."/>
            <person name="Scanlan E."/>
            <person name="Schleich S."/>
            <person name="Schroeter R."/>
            <person name="Scoffone F."/>
            <person name="Sekiguchi J."/>
            <person name="Sekowska A."/>
            <person name="Seror S.J."/>
            <person name="Serror P."/>
            <person name="Shin B.-S."/>
            <person name="Soldo B."/>
            <person name="Sorokin A."/>
            <person name="Tacconi E."/>
            <person name="Takagi T."/>
            <person name="Takahashi H."/>
            <person name="Takemaru K."/>
            <person name="Takeuchi M."/>
            <person name="Tamakoshi A."/>
            <person name="Tanaka T."/>
            <person name="Terpstra P."/>
            <person name="Tognoni A."/>
            <person name="Tosato V."/>
            <person name="Uchiyama S."/>
            <person name="Vandenbol M."/>
            <person name="Vannier F."/>
            <person name="Vassarotti A."/>
            <person name="Viari A."/>
            <person name="Wambutt R."/>
            <person name="Wedler E."/>
            <person name="Wedler H."/>
            <person name="Weitzenegger T."/>
            <person name="Winters P."/>
            <person name="Wipat A."/>
            <person name="Yamamoto H."/>
            <person name="Yamane K."/>
            <person name="Yasumoto K."/>
            <person name="Yata K."/>
            <person name="Yoshida K."/>
            <person name="Yoshikawa H.-F."/>
            <person name="Zumstein E."/>
            <person name="Yoshikawa H."/>
            <person name="Danchin A."/>
        </authorList>
    </citation>
    <scope>NUCLEOTIDE SEQUENCE [LARGE SCALE GENOMIC DNA]</scope>
    <source>
        <strain>168</strain>
    </source>
</reference>
<reference key="3">
    <citation type="journal article" date="2006" name="J. Bacteriol.">
        <title>Role of the Fur regulon in iron transport in Bacillus subtilis.</title>
        <authorList>
            <person name="Ollinger J."/>
            <person name="Song K.-B."/>
            <person name="Antelmann H."/>
            <person name="Hecker M."/>
            <person name="Helmann J.D."/>
        </authorList>
    </citation>
    <scope>FUNCTION IN IRON UPTAKE</scope>
    <source>
        <strain>168 / CU1065</strain>
    </source>
</reference>
<reference key="4">
    <citation type="journal article" date="2012" name="Mol. Microbiol.">
        <title>The biofilm formation defect of a Bacillus subtilis flotillin-defective mutant involves the protease FtsH.</title>
        <authorList>
            <person name="Yepes A."/>
            <person name="Schneider J."/>
            <person name="Mielich B."/>
            <person name="Koch G."/>
            <person name="Garcia-Betancur J.C."/>
            <person name="Ramamurthi K.S."/>
            <person name="Vlamakis H."/>
            <person name="Lopez D."/>
        </authorList>
    </citation>
    <scope>SUBCELLULAR LOCATION</scope>
    <source>
        <strain>168 / Marburg / ATCC 6051 / DSM 10 / JCM 1465 / NBRC 13719 / NCIMB 3610 / NRRL NRS-744 / VKM B-501</strain>
    </source>
</reference>
<reference key="5">
    <citation type="journal article" date="2013" name="Biochim. Biophys. Acta">
        <title>The Bacillus subtilis EfeUOB transporter is essential for high-affinity acquisition of ferrous and ferric iron.</title>
        <authorList>
            <person name="Miethke M."/>
            <person name="Monteferrante C.G."/>
            <person name="Marahiel M.A."/>
            <person name="van Dijl J.M."/>
        </authorList>
    </citation>
    <scope>FUNCTION</scope>
    <scope>IDENTIFICATION IN THE EFEUOB/M COMPLEX</scope>
    <scope>SUBCELLULAR LOCATION</scope>
    <scope>DISRUPTION PHENOTYPE</scope>
</reference>
<name>EFEM_BACSU</name>
<gene>
    <name evidence="1" type="primary">efeM</name>
    <name evidence="7" type="synonym">efeO</name>
    <name evidence="6" type="synonym">ywbM</name>
    <name type="ordered locus">BSU38270</name>
    <name type="ORF">ipa-28d</name>
</gene>
<accession>P39596</accession>